<proteinExistence type="evidence at transcript level"/>
<reference key="1">
    <citation type="journal article" date="2004" name="Genome Res.">
        <title>The status, quality, and expansion of the NIH full-length cDNA project: the Mammalian Gene Collection (MGC).</title>
        <authorList>
            <consortium name="The MGC Project Team"/>
        </authorList>
    </citation>
    <scope>NUCLEOTIDE SEQUENCE [LARGE SCALE MRNA] (ISOFORMS 1 AND 2)</scope>
    <source>
        <strain>C57BL/6J</strain>
        <tissue>Embryonic germ cell</tissue>
        <tissue>Thymus</tissue>
    </source>
</reference>
<reference key="2">
    <citation type="journal article" date="2005" name="Science">
        <title>The transcriptional landscape of the mammalian genome.</title>
        <authorList>
            <person name="Carninci P."/>
            <person name="Kasukawa T."/>
            <person name="Katayama S."/>
            <person name="Gough J."/>
            <person name="Frith M.C."/>
            <person name="Maeda N."/>
            <person name="Oyama R."/>
            <person name="Ravasi T."/>
            <person name="Lenhard B."/>
            <person name="Wells C."/>
            <person name="Kodzius R."/>
            <person name="Shimokawa K."/>
            <person name="Bajic V.B."/>
            <person name="Brenner S.E."/>
            <person name="Batalov S."/>
            <person name="Forrest A.R."/>
            <person name="Zavolan M."/>
            <person name="Davis M.J."/>
            <person name="Wilming L.G."/>
            <person name="Aidinis V."/>
            <person name="Allen J.E."/>
            <person name="Ambesi-Impiombato A."/>
            <person name="Apweiler R."/>
            <person name="Aturaliya R.N."/>
            <person name="Bailey T.L."/>
            <person name="Bansal M."/>
            <person name="Baxter L."/>
            <person name="Beisel K.W."/>
            <person name="Bersano T."/>
            <person name="Bono H."/>
            <person name="Chalk A.M."/>
            <person name="Chiu K.P."/>
            <person name="Choudhary V."/>
            <person name="Christoffels A."/>
            <person name="Clutterbuck D.R."/>
            <person name="Crowe M.L."/>
            <person name="Dalla E."/>
            <person name="Dalrymple B.P."/>
            <person name="de Bono B."/>
            <person name="Della Gatta G."/>
            <person name="di Bernardo D."/>
            <person name="Down T."/>
            <person name="Engstrom P."/>
            <person name="Fagiolini M."/>
            <person name="Faulkner G."/>
            <person name="Fletcher C.F."/>
            <person name="Fukushima T."/>
            <person name="Furuno M."/>
            <person name="Futaki S."/>
            <person name="Gariboldi M."/>
            <person name="Georgii-Hemming P."/>
            <person name="Gingeras T.R."/>
            <person name="Gojobori T."/>
            <person name="Green R.E."/>
            <person name="Gustincich S."/>
            <person name="Harbers M."/>
            <person name="Hayashi Y."/>
            <person name="Hensch T.K."/>
            <person name="Hirokawa N."/>
            <person name="Hill D."/>
            <person name="Huminiecki L."/>
            <person name="Iacono M."/>
            <person name="Ikeo K."/>
            <person name="Iwama A."/>
            <person name="Ishikawa T."/>
            <person name="Jakt M."/>
            <person name="Kanapin A."/>
            <person name="Katoh M."/>
            <person name="Kawasawa Y."/>
            <person name="Kelso J."/>
            <person name="Kitamura H."/>
            <person name="Kitano H."/>
            <person name="Kollias G."/>
            <person name="Krishnan S.P."/>
            <person name="Kruger A."/>
            <person name="Kummerfeld S.K."/>
            <person name="Kurochkin I.V."/>
            <person name="Lareau L.F."/>
            <person name="Lazarevic D."/>
            <person name="Lipovich L."/>
            <person name="Liu J."/>
            <person name="Liuni S."/>
            <person name="McWilliam S."/>
            <person name="Madan Babu M."/>
            <person name="Madera M."/>
            <person name="Marchionni L."/>
            <person name="Matsuda H."/>
            <person name="Matsuzawa S."/>
            <person name="Miki H."/>
            <person name="Mignone F."/>
            <person name="Miyake S."/>
            <person name="Morris K."/>
            <person name="Mottagui-Tabar S."/>
            <person name="Mulder N."/>
            <person name="Nakano N."/>
            <person name="Nakauchi H."/>
            <person name="Ng P."/>
            <person name="Nilsson R."/>
            <person name="Nishiguchi S."/>
            <person name="Nishikawa S."/>
            <person name="Nori F."/>
            <person name="Ohara O."/>
            <person name="Okazaki Y."/>
            <person name="Orlando V."/>
            <person name="Pang K.C."/>
            <person name="Pavan W.J."/>
            <person name="Pavesi G."/>
            <person name="Pesole G."/>
            <person name="Petrovsky N."/>
            <person name="Piazza S."/>
            <person name="Reed J."/>
            <person name="Reid J.F."/>
            <person name="Ring B.Z."/>
            <person name="Ringwald M."/>
            <person name="Rost B."/>
            <person name="Ruan Y."/>
            <person name="Salzberg S.L."/>
            <person name="Sandelin A."/>
            <person name="Schneider C."/>
            <person name="Schoenbach C."/>
            <person name="Sekiguchi K."/>
            <person name="Semple C.A."/>
            <person name="Seno S."/>
            <person name="Sessa L."/>
            <person name="Sheng Y."/>
            <person name="Shibata Y."/>
            <person name="Shimada H."/>
            <person name="Shimada K."/>
            <person name="Silva D."/>
            <person name="Sinclair B."/>
            <person name="Sperling S."/>
            <person name="Stupka E."/>
            <person name="Sugiura K."/>
            <person name="Sultana R."/>
            <person name="Takenaka Y."/>
            <person name="Taki K."/>
            <person name="Tammoja K."/>
            <person name="Tan S.L."/>
            <person name="Tang S."/>
            <person name="Taylor M.S."/>
            <person name="Tegner J."/>
            <person name="Teichmann S.A."/>
            <person name="Ueda H.R."/>
            <person name="van Nimwegen E."/>
            <person name="Verardo R."/>
            <person name="Wei C.L."/>
            <person name="Yagi K."/>
            <person name="Yamanishi H."/>
            <person name="Zabarovsky E."/>
            <person name="Zhu S."/>
            <person name="Zimmer A."/>
            <person name="Hide W."/>
            <person name="Bult C."/>
            <person name="Grimmond S.M."/>
            <person name="Teasdale R.D."/>
            <person name="Liu E.T."/>
            <person name="Brusic V."/>
            <person name="Quackenbush J."/>
            <person name="Wahlestedt C."/>
            <person name="Mattick J.S."/>
            <person name="Hume D.A."/>
            <person name="Kai C."/>
            <person name="Sasaki D."/>
            <person name="Tomaru Y."/>
            <person name="Fukuda S."/>
            <person name="Kanamori-Katayama M."/>
            <person name="Suzuki M."/>
            <person name="Aoki J."/>
            <person name="Arakawa T."/>
            <person name="Iida J."/>
            <person name="Imamura K."/>
            <person name="Itoh M."/>
            <person name="Kato T."/>
            <person name="Kawaji H."/>
            <person name="Kawagashira N."/>
            <person name="Kawashima T."/>
            <person name="Kojima M."/>
            <person name="Kondo S."/>
            <person name="Konno H."/>
            <person name="Nakano K."/>
            <person name="Ninomiya N."/>
            <person name="Nishio T."/>
            <person name="Okada M."/>
            <person name="Plessy C."/>
            <person name="Shibata K."/>
            <person name="Shiraki T."/>
            <person name="Suzuki S."/>
            <person name="Tagami M."/>
            <person name="Waki K."/>
            <person name="Watahiki A."/>
            <person name="Okamura-Oho Y."/>
            <person name="Suzuki H."/>
            <person name="Kawai J."/>
            <person name="Hayashizaki Y."/>
        </authorList>
    </citation>
    <scope>NUCLEOTIDE SEQUENCE [LARGE SCALE MRNA] OF 1-113 (ISOFORM 1)</scope>
    <source>
        <strain>C57BL/6J</strain>
        <tissue>Tongue</tissue>
    </source>
</reference>
<reference key="3">
    <citation type="journal article" date="2011" name="Stem Cells">
        <title>A novel role for an RNA polymerase III subunit POLR3G in regulating pluripotency in human embryonic stem cells.</title>
        <authorList>
            <person name="Wong R.C."/>
            <person name="Pollan S."/>
            <person name="Fong H."/>
            <person name="Ibrahim A."/>
            <person name="Smith E.L."/>
            <person name="Ho M."/>
            <person name="Laslett A.L."/>
            <person name="Donovan P.J."/>
        </authorList>
    </citation>
    <scope>SUBCELLULAR LOCATION</scope>
    <scope>DEVELOPMENTAL STAGE</scope>
</reference>
<reference key="4">
    <citation type="journal article" date="2014" name="Genome Res.">
        <title>Gene duplication and neofunctionalization: POLR3G and POLR3GL.</title>
        <authorList>
            <person name="Renaud M."/>
            <person name="Praz V."/>
            <person name="Vieu E."/>
            <person name="Florens L."/>
            <person name="Washburn M.P."/>
            <person name="l'Hote P."/>
            <person name="Hernandez N."/>
        </authorList>
    </citation>
    <scope>TISSUE SPECIFICITY</scope>
</reference>
<organism>
    <name type="scientific">Mus musculus</name>
    <name type="common">Mouse</name>
    <dbReference type="NCBI Taxonomy" id="10090"/>
    <lineage>
        <taxon>Eukaryota</taxon>
        <taxon>Metazoa</taxon>
        <taxon>Chordata</taxon>
        <taxon>Craniata</taxon>
        <taxon>Vertebrata</taxon>
        <taxon>Euteleostomi</taxon>
        <taxon>Mammalia</taxon>
        <taxon>Eutheria</taxon>
        <taxon>Euarchontoglires</taxon>
        <taxon>Glires</taxon>
        <taxon>Rodentia</taxon>
        <taxon>Myomorpha</taxon>
        <taxon>Muroidea</taxon>
        <taxon>Muridae</taxon>
        <taxon>Murinae</taxon>
        <taxon>Mus</taxon>
        <taxon>Mus</taxon>
    </lineage>
</organism>
<keyword id="KW-0025">Alternative splicing</keyword>
<keyword id="KW-0051">Antiviral defense</keyword>
<keyword id="KW-0963">Cytoplasm</keyword>
<keyword id="KW-0391">Immunity</keyword>
<keyword id="KW-0399">Innate immunity</keyword>
<keyword id="KW-0539">Nucleus</keyword>
<keyword id="KW-0597">Phosphoprotein</keyword>
<keyword id="KW-1185">Reference proteome</keyword>
<keyword id="KW-0804">Transcription</keyword>
<comment type="function">
    <text evidence="1">DNA-dependent RNA polymerase catalyzes the transcription of DNA into RNA using the four ribonucleoside triphosphates as substrates (By similarity). Specific peripheric component of RNA polymerase III (Pol III) which synthesizes small non-coding RNAs including 5S rRNA, snRNAs, tRNAs and miRNAs from at least 500 distinct genomic loci (By similarity). Acts as a long tether that bridges POLR3C/RPC3-POLR3F/RPC6-POLR3G/RPC7 heterotrimer and the mobile stalk of Pol III, coordinating the dynamics of Pol III stalk and clamp modules during the transition from apo to elongation state. Pol III exists as two alternative complexes defined by the mutually exclusive incorporation of subunit POLR3G/RPC7alpha or POLR3GL/RPC7beta. POLR3G/RPC7alpha modulates Pol III transcriptome by specifically enhancing the transcription of snaR-A non-coding RNAs. At resting state, occupies the active site of apo Pol III and keeps Pol III in an autoinhibitory mode, preventing non-specific transcription (By similarity). Pol III plays a key role in sensing and limiting infection by intracellular bacteria and DNA viruses. Acts as a nuclear and cytosolic DNA sensor involved in innate immune response. Can sense non-self dsDNA that serves as template for transcription into dsRNA. The non-self RNA polymerase III transcripts, such as Epstein-Barr virus-encoded RNAs (EBERs), induce type I interferon and NF-kappa-B through the RIG-I pathway (By similarity).</text>
</comment>
<comment type="subunit">
    <text evidence="1">Component of the RNA polymerase III complex consisting of 17 subunits: a ten-subunit horseshoe-shaped catalytic core composed of POLR3A/RPC1, POLR3B/RPC2, POLR1C/RPAC1, POLR1D/RPAC2, POLR3K/RPC10, POLR2E/RPABC1, POLR2F/RPABC2, POLR2H/RPABC3, POLR2K/RPABC4 and POLR2L/RPABC5; a mobile stalk composed of two subunits POLR3H/RPC8 and CRCP/RPC9, protruding from the core and functioning primarily in transcription initiation; and additional subunits homologous to general transcription factors of the RNA polymerase II machinery, POLR3C/RPC3-POLR3F/RPC6-POLR3G/RPC7 heterotrimer required for transcription initiation and POLR3D/RPC4-POLR3E/RPC5 heterodimer involved in both transcription initiation and termination (By similarity). Directly interacts with POLR3C/RPC62. Also found in a trimeric complex with POLR3C/RPC3 and POLR3GL (By similarity).</text>
</comment>
<comment type="subcellular location">
    <subcellularLocation>
        <location evidence="3">Nucleus</location>
    </subcellularLocation>
    <subcellularLocation>
        <location evidence="3">Cytoplasm</location>
    </subcellularLocation>
    <text evidence="3">In zygotes and the 2-cell stage embryos, mainly in the cytoplasm. Starts to localize to the nucleus in the 8-16 cell stage embryo and early blastocysts.</text>
</comment>
<comment type="alternative products">
    <event type="alternative splicing"/>
    <isoform>
        <id>Q6NXY9-1</id>
        <name>1</name>
        <sequence type="displayed"/>
    </isoform>
    <isoform>
        <id>Q6NXY9-2</id>
        <name>2</name>
        <sequence type="described" ref="VSP_012672 VSP_012673"/>
    </isoform>
</comment>
<comment type="tissue specificity">
    <text evidence="4">Expressed at low levels in the liver.</text>
</comment>
<comment type="developmental stage">
    <text evidence="3">Not detectable in unfertilized oocytes. First detected in zygotes and the 2-cell stage embryos. Expressed until at least the early blastocyst stage.</text>
</comment>
<comment type="similarity">
    <text evidence="6">Belongs to the eukaryotic RPC7 RNA polymerase subunit family.</text>
</comment>
<gene>
    <name type="primary">Polr3g</name>
</gene>
<sequence length="223" mass="25947">MAGNKGRGRAAYTFNIEAVGFSRGEKLPDVVLKPPPLFPDTDYKPVPLKTGEDEDYMLALKQELRETVKRLPYFIEPPEEKQDDIERYSKRYMKVYKEEWVPDWRRLPREMMPRKKCKKGDPKSKPSKAAAKATSLINSADVLKTIEELEKRGEGERSDEENEEKEGSKEKDKDDEEDGEEDAEQEDYDEEEQEEENDYINSYFDNGDDFGVDSDDNMDEATY</sequence>
<protein>
    <recommendedName>
        <fullName>DNA-directed RNA polymerase III subunit RPC7</fullName>
        <shortName>RNA polymerase III subunit C7</shortName>
    </recommendedName>
    <alternativeName>
        <fullName>DNA-directed RNA polymerase III subunit G</fullName>
    </alternativeName>
</protein>
<accession>Q6NXY9</accession>
<accession>Q8K0W5</accession>
<accession>Q9CV05</accession>
<dbReference type="EMBL" id="BC030063">
    <property type="protein sequence ID" value="AAH30063.1"/>
    <property type="molecule type" value="mRNA"/>
</dbReference>
<dbReference type="EMBL" id="BC066818">
    <property type="protein sequence ID" value="AAH66818.1"/>
    <property type="molecule type" value="mRNA"/>
</dbReference>
<dbReference type="EMBL" id="AK010126">
    <property type="protein sequence ID" value="BAB26717.3"/>
    <property type="molecule type" value="mRNA"/>
</dbReference>
<dbReference type="CCDS" id="CCDS36738.1">
    <molecule id="Q6NXY9-1"/>
</dbReference>
<dbReference type="RefSeq" id="NP_001074645.1">
    <molecule id="Q6NXY9-1"/>
    <property type="nucleotide sequence ID" value="NM_001081176.1"/>
</dbReference>
<dbReference type="FunCoup" id="Q6NXY9">
    <property type="interactions" value="2398"/>
</dbReference>
<dbReference type="STRING" id="10090.ENSMUSP00000035289"/>
<dbReference type="iPTMnet" id="Q6NXY9"/>
<dbReference type="PhosphoSitePlus" id="Q6NXY9"/>
<dbReference type="PaxDb" id="10090-ENSMUSP00000035289"/>
<dbReference type="PeptideAtlas" id="Q6NXY9"/>
<dbReference type="ProteomicsDB" id="299869">
    <molecule id="Q6NXY9-1"/>
</dbReference>
<dbReference type="ProteomicsDB" id="299870">
    <molecule id="Q6NXY9-2"/>
</dbReference>
<dbReference type="Pumba" id="Q6NXY9"/>
<dbReference type="Ensembl" id="ENSMUST00000048993.12">
    <molecule id="Q6NXY9-1"/>
    <property type="protein sequence ID" value="ENSMUSP00000035289.6"/>
    <property type="gene ID" value="ENSMUSG00000035834.12"/>
</dbReference>
<dbReference type="Ensembl" id="ENSMUST00000161920.2">
    <molecule id="Q6NXY9-2"/>
    <property type="protein sequence ID" value="ENSMUSP00000125054.2"/>
    <property type="gene ID" value="ENSMUSG00000035834.12"/>
</dbReference>
<dbReference type="GeneID" id="67486"/>
<dbReference type="KEGG" id="mmu:67486"/>
<dbReference type="UCSC" id="uc007rhx.1">
    <molecule id="Q6NXY9-1"/>
    <property type="organism name" value="mouse"/>
</dbReference>
<dbReference type="UCSC" id="uc007rhz.1">
    <molecule id="Q6NXY9-2"/>
    <property type="organism name" value="mouse"/>
</dbReference>
<dbReference type="AGR" id="MGI:1914736"/>
<dbReference type="CTD" id="10622"/>
<dbReference type="MGI" id="MGI:1914736">
    <property type="gene designation" value="Polr3g"/>
</dbReference>
<dbReference type="VEuPathDB" id="HostDB:ENSMUSG00000035834"/>
<dbReference type="eggNOG" id="ENOG502RY1A">
    <property type="taxonomic scope" value="Eukaryota"/>
</dbReference>
<dbReference type="GeneTree" id="ENSGT01130000278585"/>
<dbReference type="HOGENOM" id="CLU_084309_0_0_1"/>
<dbReference type="InParanoid" id="Q6NXY9"/>
<dbReference type="OMA" id="MPRKKCR"/>
<dbReference type="OrthoDB" id="5377312at2759"/>
<dbReference type="PhylomeDB" id="Q6NXY9"/>
<dbReference type="TreeFam" id="TF103052"/>
<dbReference type="Reactome" id="R-MMU-76061">
    <property type="pathway name" value="RNA Polymerase III Transcription Initiation From Type 1 Promoter"/>
</dbReference>
<dbReference type="Reactome" id="R-MMU-76066">
    <property type="pathway name" value="RNA Polymerase III Transcription Initiation From Type 2 Promoter"/>
</dbReference>
<dbReference type="Reactome" id="R-MMU-76071">
    <property type="pathway name" value="RNA Polymerase III Transcription Initiation From Type 3 Promoter"/>
</dbReference>
<dbReference type="BioGRID-ORCS" id="67486">
    <property type="hits" value="6 hits in 81 CRISPR screens"/>
</dbReference>
<dbReference type="ChiTaRS" id="Polr3g">
    <property type="organism name" value="mouse"/>
</dbReference>
<dbReference type="PRO" id="PR:Q6NXY9"/>
<dbReference type="Proteomes" id="UP000000589">
    <property type="component" value="Chromosome 13"/>
</dbReference>
<dbReference type="RNAct" id="Q6NXY9">
    <property type="molecule type" value="protein"/>
</dbReference>
<dbReference type="Bgee" id="ENSMUSG00000035834">
    <property type="expression patterns" value="Expressed in lumbar dorsal root ganglion and 165 other cell types or tissues"/>
</dbReference>
<dbReference type="GO" id="GO:0005737">
    <property type="term" value="C:cytoplasm"/>
    <property type="evidence" value="ECO:0007669"/>
    <property type="project" value="UniProtKB-SubCell"/>
</dbReference>
<dbReference type="GO" id="GO:0005634">
    <property type="term" value="C:nucleus"/>
    <property type="evidence" value="ECO:0000314"/>
    <property type="project" value="MGI"/>
</dbReference>
<dbReference type="GO" id="GO:0005666">
    <property type="term" value="C:RNA polymerase III complex"/>
    <property type="evidence" value="ECO:0000266"/>
    <property type="project" value="MGI"/>
</dbReference>
<dbReference type="GO" id="GO:0003682">
    <property type="term" value="F:chromatin binding"/>
    <property type="evidence" value="ECO:0000314"/>
    <property type="project" value="MGI"/>
</dbReference>
<dbReference type="GO" id="GO:0008283">
    <property type="term" value="P:cell population proliferation"/>
    <property type="evidence" value="ECO:0000266"/>
    <property type="project" value="MGI"/>
</dbReference>
<dbReference type="GO" id="GO:0051607">
    <property type="term" value="P:defense response to virus"/>
    <property type="evidence" value="ECO:0007669"/>
    <property type="project" value="UniProtKB-KW"/>
</dbReference>
<dbReference type="GO" id="GO:0050673">
    <property type="term" value="P:epithelial cell proliferation"/>
    <property type="evidence" value="ECO:0000270"/>
    <property type="project" value="MGI"/>
</dbReference>
<dbReference type="GO" id="GO:0045087">
    <property type="term" value="P:innate immune response"/>
    <property type="evidence" value="ECO:0007669"/>
    <property type="project" value="UniProtKB-KW"/>
</dbReference>
<dbReference type="GO" id="GO:0045089">
    <property type="term" value="P:positive regulation of innate immune response"/>
    <property type="evidence" value="ECO:0000250"/>
    <property type="project" value="UniProtKB"/>
</dbReference>
<dbReference type="GO" id="GO:0032728">
    <property type="term" value="P:positive regulation of interferon-beta production"/>
    <property type="evidence" value="ECO:0000250"/>
    <property type="project" value="UniProtKB"/>
</dbReference>
<dbReference type="GO" id="GO:0006383">
    <property type="term" value="P:transcription by RNA polymerase III"/>
    <property type="evidence" value="ECO:0000250"/>
    <property type="project" value="UniProtKB"/>
</dbReference>
<dbReference type="InterPro" id="IPR024661">
    <property type="entry name" value="RNA_pol_III_Rpc31"/>
</dbReference>
<dbReference type="PANTHER" id="PTHR15367">
    <property type="entry name" value="DNA-DIRECTED RNA POLYMERASE III"/>
    <property type="match status" value="1"/>
</dbReference>
<dbReference type="PANTHER" id="PTHR15367:SF3">
    <property type="entry name" value="DNA-DIRECTED RNA POLYMERASE III SUBUNIT RPC7"/>
    <property type="match status" value="1"/>
</dbReference>
<dbReference type="Pfam" id="PF11705">
    <property type="entry name" value="RNA_pol_3_Rpc31"/>
    <property type="match status" value="1"/>
</dbReference>
<feature type="chain" id="PRO_0000073979" description="DNA-directed RNA polymerase III subunit RPC7">
    <location>
        <begin position="1"/>
        <end position="223"/>
    </location>
</feature>
<feature type="region of interest" description="Disordered" evidence="2">
    <location>
        <begin position="111"/>
        <end position="223"/>
    </location>
</feature>
<feature type="compositionally biased region" description="Basic and acidic residues" evidence="2">
    <location>
        <begin position="111"/>
        <end position="124"/>
    </location>
</feature>
<feature type="compositionally biased region" description="Basic and acidic residues" evidence="2">
    <location>
        <begin position="144"/>
        <end position="156"/>
    </location>
</feature>
<feature type="compositionally biased region" description="Acidic residues" evidence="2">
    <location>
        <begin position="173"/>
        <end position="198"/>
    </location>
</feature>
<feature type="compositionally biased region" description="Acidic residues" evidence="2">
    <location>
        <begin position="206"/>
        <end position="223"/>
    </location>
</feature>
<feature type="modified residue" description="Phosphothreonine" evidence="1">
    <location>
        <position position="134"/>
    </location>
</feature>
<feature type="modified residue" description="Phosphoserine" evidence="1">
    <location>
        <position position="158"/>
    </location>
</feature>
<feature type="splice variant" id="VSP_012672" description="In isoform 2." evidence="5">
    <original>DDIERYSKRYMKVYKEEWVPDWRRLPREMMPRKKCKKGDPKSKPSKAAAKATSLINSADVLKTIEELEKRGEGERSDE</original>
    <variation>GTHARQALPEAGSSVFTEGAVDAGTCDHVTQPITQLEKTLLTRIVRKEKHLYFIVLFFFFFFLQLTHNTLCLPFVIQY</variation>
    <location>
        <begin position="83"/>
        <end position="160"/>
    </location>
</feature>
<feature type="splice variant" id="VSP_012673" description="In isoform 2." evidence="5">
    <location>
        <begin position="161"/>
        <end position="223"/>
    </location>
</feature>
<name>RPC7_MOUSE</name>
<evidence type="ECO:0000250" key="1">
    <source>
        <dbReference type="UniProtKB" id="O15318"/>
    </source>
</evidence>
<evidence type="ECO:0000256" key="2">
    <source>
        <dbReference type="SAM" id="MobiDB-lite"/>
    </source>
</evidence>
<evidence type="ECO:0000269" key="3">
    <source>
    </source>
</evidence>
<evidence type="ECO:0000269" key="4">
    <source>
    </source>
</evidence>
<evidence type="ECO:0000303" key="5">
    <source>
    </source>
</evidence>
<evidence type="ECO:0000305" key="6"/>